<proteinExistence type="inferred from homology"/>
<keyword id="KW-0131">Cell cycle</keyword>
<keyword id="KW-0132">Cell division</keyword>
<keyword id="KW-0963">Cytoplasm</keyword>
<keyword id="KW-0342">GTP-binding</keyword>
<keyword id="KW-0547">Nucleotide-binding</keyword>
<keyword id="KW-0717">Septation</keyword>
<protein>
    <recommendedName>
        <fullName evidence="1">Cell division protein FtsZ 1</fullName>
    </recommendedName>
</protein>
<evidence type="ECO:0000255" key="1">
    <source>
        <dbReference type="HAMAP-Rule" id="MF_00909"/>
    </source>
</evidence>
<evidence type="ECO:0000256" key="2">
    <source>
        <dbReference type="SAM" id="MobiDB-lite"/>
    </source>
</evidence>
<dbReference type="EMBL" id="U56247">
    <property type="protein sequence ID" value="AAA99162.1"/>
    <property type="molecule type" value="Genomic_DNA"/>
</dbReference>
<dbReference type="SMR" id="Q52630"/>
<dbReference type="GO" id="GO:0032153">
    <property type="term" value="C:cell division site"/>
    <property type="evidence" value="ECO:0007669"/>
    <property type="project" value="UniProtKB-UniRule"/>
</dbReference>
<dbReference type="GO" id="GO:0005737">
    <property type="term" value="C:cytoplasm"/>
    <property type="evidence" value="ECO:0007669"/>
    <property type="project" value="UniProtKB-SubCell"/>
</dbReference>
<dbReference type="GO" id="GO:0005525">
    <property type="term" value="F:GTP binding"/>
    <property type="evidence" value="ECO:0007669"/>
    <property type="project" value="UniProtKB-UniRule"/>
</dbReference>
<dbReference type="GO" id="GO:0003924">
    <property type="term" value="F:GTPase activity"/>
    <property type="evidence" value="ECO:0007669"/>
    <property type="project" value="UniProtKB-UniRule"/>
</dbReference>
<dbReference type="GO" id="GO:0043093">
    <property type="term" value="P:FtsZ-dependent cytokinesis"/>
    <property type="evidence" value="ECO:0007669"/>
    <property type="project" value="UniProtKB-UniRule"/>
</dbReference>
<dbReference type="GO" id="GO:0051258">
    <property type="term" value="P:protein polymerization"/>
    <property type="evidence" value="ECO:0007669"/>
    <property type="project" value="UniProtKB-UniRule"/>
</dbReference>
<dbReference type="CDD" id="cd02201">
    <property type="entry name" value="FtsZ_type1"/>
    <property type="match status" value="1"/>
</dbReference>
<dbReference type="FunFam" id="3.40.50.1440:FF:000023">
    <property type="entry name" value="Cell division protein FtsZ"/>
    <property type="match status" value="1"/>
</dbReference>
<dbReference type="Gene3D" id="3.30.1330.20">
    <property type="entry name" value="Tubulin/FtsZ, C-terminal domain"/>
    <property type="match status" value="1"/>
</dbReference>
<dbReference type="Gene3D" id="3.40.50.1440">
    <property type="entry name" value="Tubulin/FtsZ, GTPase domain"/>
    <property type="match status" value="1"/>
</dbReference>
<dbReference type="HAMAP" id="MF_00909">
    <property type="entry name" value="FtsZ"/>
    <property type="match status" value="1"/>
</dbReference>
<dbReference type="InterPro" id="IPR000158">
    <property type="entry name" value="Cell_div_FtsZ"/>
</dbReference>
<dbReference type="InterPro" id="IPR020805">
    <property type="entry name" value="Cell_div_FtsZ_CS"/>
</dbReference>
<dbReference type="InterPro" id="IPR045061">
    <property type="entry name" value="FtsZ/CetZ"/>
</dbReference>
<dbReference type="InterPro" id="IPR024757">
    <property type="entry name" value="FtsZ_C"/>
</dbReference>
<dbReference type="InterPro" id="IPR008280">
    <property type="entry name" value="Tub_FtsZ_C"/>
</dbReference>
<dbReference type="InterPro" id="IPR037103">
    <property type="entry name" value="Tubulin/FtsZ-like_C"/>
</dbReference>
<dbReference type="InterPro" id="IPR018316">
    <property type="entry name" value="Tubulin/FtsZ_2-layer-sand-dom"/>
</dbReference>
<dbReference type="InterPro" id="IPR036525">
    <property type="entry name" value="Tubulin/FtsZ_GTPase_sf"/>
</dbReference>
<dbReference type="InterPro" id="IPR003008">
    <property type="entry name" value="Tubulin_FtsZ_GTPase"/>
</dbReference>
<dbReference type="NCBIfam" id="TIGR00065">
    <property type="entry name" value="ftsZ"/>
    <property type="match status" value="1"/>
</dbReference>
<dbReference type="PANTHER" id="PTHR30314">
    <property type="entry name" value="CELL DIVISION PROTEIN FTSZ-RELATED"/>
    <property type="match status" value="1"/>
</dbReference>
<dbReference type="PANTHER" id="PTHR30314:SF3">
    <property type="entry name" value="MITOCHONDRIAL DIVISION PROTEIN FSZA"/>
    <property type="match status" value="1"/>
</dbReference>
<dbReference type="Pfam" id="PF12327">
    <property type="entry name" value="FtsZ_C"/>
    <property type="match status" value="1"/>
</dbReference>
<dbReference type="Pfam" id="PF00091">
    <property type="entry name" value="Tubulin"/>
    <property type="match status" value="1"/>
</dbReference>
<dbReference type="PRINTS" id="PR00423">
    <property type="entry name" value="CELLDVISFTSZ"/>
</dbReference>
<dbReference type="SMART" id="SM00864">
    <property type="entry name" value="Tubulin"/>
    <property type="match status" value="1"/>
</dbReference>
<dbReference type="SMART" id="SM00865">
    <property type="entry name" value="Tubulin_C"/>
    <property type="match status" value="1"/>
</dbReference>
<dbReference type="SUPFAM" id="SSF55307">
    <property type="entry name" value="Tubulin C-terminal domain-like"/>
    <property type="match status" value="1"/>
</dbReference>
<dbReference type="SUPFAM" id="SSF52490">
    <property type="entry name" value="Tubulin nucleotide-binding domain-like"/>
    <property type="match status" value="1"/>
</dbReference>
<dbReference type="PROSITE" id="PS01134">
    <property type="entry name" value="FTSZ_1"/>
    <property type="match status" value="1"/>
</dbReference>
<dbReference type="PROSITE" id="PS01135">
    <property type="entry name" value="FTSZ_2"/>
    <property type="match status" value="1"/>
</dbReference>
<organism>
    <name type="scientific">Pyrococcus woesei</name>
    <dbReference type="NCBI Taxonomy" id="2262"/>
    <lineage>
        <taxon>Archaea</taxon>
        <taxon>Methanobacteriati</taxon>
        <taxon>Methanobacteriota</taxon>
        <taxon>Thermococci</taxon>
        <taxon>Thermococcales</taxon>
        <taxon>Thermococcaceae</taxon>
        <taxon>Pyrococcus</taxon>
    </lineage>
</organism>
<sequence>MSLEESPKRKIRCPEVQVPQSNIDEELEKIVEQIKARIYVVGVGGAGCNTVNRMMEVGVTGAKIIAVNTDAQDLLKVKAHQKILIGKELTRGLGAGNDPKIGEEAAKESERELRDALEGADMVFITCGLGGGTGTGAAPVIAEIARKMGELTVSVVTLPFTMEGIRRAKNAEYGLKRLVKYSDTVIVIPNDKLLEVAPKLPIQMAFKVADEILVQAVKGITELITKPGLVNLDFNDVRAVMKDRGVAMIGIGESDSEKRALEAAEQALNSPLLDVDISGASGALIHISGADVKLEEAQQIIEYVTRNVDSKAQVIWGIQLEPELEKTIRVMVVITGVTSRYITPEEETPLETPEESPSIEISIPEL</sequence>
<gene>
    <name evidence="1" type="primary">ftsZ1</name>
</gene>
<accession>Q52630</accession>
<name>FTSZ1_PYRWO</name>
<reference key="1">
    <citation type="journal article" date="1996" name="Proc. Natl. Acad. Sci. U.S.A.">
        <title>An archaebacterial homologue of the essential eubacterial cell division protein ftsZ.</title>
        <authorList>
            <person name="Baumann P."/>
            <person name="Jackson S.P."/>
        </authorList>
    </citation>
    <scope>NUCLEOTIDE SEQUENCE [GENOMIC DNA]</scope>
</reference>
<feature type="chain" id="PRO_0000114408" description="Cell division protein FtsZ 1">
    <location>
        <begin position="1"/>
        <end position="366"/>
    </location>
</feature>
<feature type="region of interest" description="Disordered" evidence="2">
    <location>
        <begin position="344"/>
        <end position="366"/>
    </location>
</feature>
<feature type="compositionally biased region" description="Acidic residues" evidence="2">
    <location>
        <begin position="344"/>
        <end position="354"/>
    </location>
</feature>
<feature type="compositionally biased region" description="Low complexity" evidence="2">
    <location>
        <begin position="355"/>
        <end position="366"/>
    </location>
</feature>
<feature type="binding site" evidence="1">
    <location>
        <begin position="45"/>
        <end position="49"/>
    </location>
    <ligand>
        <name>GTP</name>
        <dbReference type="ChEBI" id="CHEBI:37565"/>
    </ligand>
</feature>
<feature type="binding site" evidence="1">
    <location>
        <begin position="132"/>
        <end position="134"/>
    </location>
    <ligand>
        <name>GTP</name>
        <dbReference type="ChEBI" id="CHEBI:37565"/>
    </ligand>
</feature>
<feature type="binding site" evidence="1">
    <location>
        <position position="163"/>
    </location>
    <ligand>
        <name>GTP</name>
        <dbReference type="ChEBI" id="CHEBI:37565"/>
    </ligand>
</feature>
<feature type="binding site" evidence="1">
    <location>
        <position position="167"/>
    </location>
    <ligand>
        <name>GTP</name>
        <dbReference type="ChEBI" id="CHEBI:37565"/>
    </ligand>
</feature>
<feature type="binding site" evidence="1">
    <location>
        <position position="210"/>
    </location>
    <ligand>
        <name>GTP</name>
        <dbReference type="ChEBI" id="CHEBI:37565"/>
    </ligand>
</feature>
<comment type="function">
    <text evidence="1">Essential cell division protein that forms a contractile ring structure (Z ring) at the future cell division site. The regulation of the ring assembly controls the timing and the location of cell division. One of the functions of the FtsZ ring is to recruit other cell division proteins to the septum to produce a new cell wall between the dividing cells. Binds GTP and shows GTPase activity.</text>
</comment>
<comment type="subunit">
    <text evidence="1">Homodimer. Polymerizes to form a dynamic ring structure in a strictly GTP-dependent manner. Interacts directly with several other division proteins.</text>
</comment>
<comment type="subcellular location">
    <subcellularLocation>
        <location evidence="1">Cytoplasm</location>
    </subcellularLocation>
    <text evidence="1">Assembles at midcell at the inner surface of the cytoplasmic membrane.</text>
</comment>
<comment type="similarity">
    <text evidence="1">Belongs to the FtsZ family.</text>
</comment>